<protein>
    <recommendedName>
        <fullName evidence="1">Ferrochelatase</fullName>
        <ecNumber evidence="1">4.98.1.1</ecNumber>
    </recommendedName>
    <alternativeName>
        <fullName evidence="1">Heme synthase</fullName>
    </alternativeName>
    <alternativeName>
        <fullName evidence="1">Protoheme ferro-lyase</fullName>
    </alternativeName>
</protein>
<proteinExistence type="inferred from homology"/>
<evidence type="ECO:0000255" key="1">
    <source>
        <dbReference type="HAMAP-Rule" id="MF_00323"/>
    </source>
</evidence>
<sequence length="320" mass="35942">MRQTKTGILLANLGTPDAPTPEAVKRYLKQFLSDRRVVDTPRLLWWPLLRGVILPLRSPRVAKLYQSIWMDGGSPLMVYSREQQQALAARLPDTPVALGMSYGSPSLESAVDELLASDVDHIVVLPLYPQYSCSTVGAVWDELGRILARKRRIPGISFIRDYADDGAYIDALAKSARESFARHGEPDVLLLSYHGIPQRYADEGDDYPQRCRDTTRELVSALGLPPEKVMMTFQSRFGREPWLTPYTDETLKMLGEKGTGHIQVMCPGFAADCLETLEEIAEQNREIFLEVGGKKYAYIPALNATPEHIDMMLKLTAPYR</sequence>
<reference key="1">
    <citation type="journal article" date="2009" name="BMC Genomics">
        <title>Pseudogene accumulation in the evolutionary histories of Salmonella enterica serovars Paratyphi A and Typhi.</title>
        <authorList>
            <person name="Holt K.E."/>
            <person name="Thomson N.R."/>
            <person name="Wain J."/>
            <person name="Langridge G.C."/>
            <person name="Hasan R."/>
            <person name="Bhutta Z.A."/>
            <person name="Quail M.A."/>
            <person name="Norbertczak H."/>
            <person name="Walker D."/>
            <person name="Simmonds M."/>
            <person name="White B."/>
            <person name="Bason N."/>
            <person name="Mungall K."/>
            <person name="Dougan G."/>
            <person name="Parkhill J."/>
        </authorList>
    </citation>
    <scope>NUCLEOTIDE SEQUENCE [LARGE SCALE GENOMIC DNA]</scope>
    <source>
        <strain>AKU_12601</strain>
    </source>
</reference>
<dbReference type="EC" id="4.98.1.1" evidence="1"/>
<dbReference type="EMBL" id="FM200053">
    <property type="protein sequence ID" value="CAR60286.1"/>
    <property type="molecule type" value="Genomic_DNA"/>
</dbReference>
<dbReference type="RefSeq" id="WP_001250080.1">
    <property type="nucleotide sequence ID" value="NC_011147.1"/>
</dbReference>
<dbReference type="SMR" id="B5BD43"/>
<dbReference type="KEGG" id="sek:SSPA2076"/>
<dbReference type="HOGENOM" id="CLU_018884_0_0_6"/>
<dbReference type="UniPathway" id="UPA00252">
    <property type="reaction ID" value="UER00325"/>
</dbReference>
<dbReference type="Proteomes" id="UP000001869">
    <property type="component" value="Chromosome"/>
</dbReference>
<dbReference type="GO" id="GO:0005737">
    <property type="term" value="C:cytoplasm"/>
    <property type="evidence" value="ECO:0007669"/>
    <property type="project" value="UniProtKB-SubCell"/>
</dbReference>
<dbReference type="GO" id="GO:0004325">
    <property type="term" value="F:ferrochelatase activity"/>
    <property type="evidence" value="ECO:0007669"/>
    <property type="project" value="UniProtKB-UniRule"/>
</dbReference>
<dbReference type="GO" id="GO:0046872">
    <property type="term" value="F:metal ion binding"/>
    <property type="evidence" value="ECO:0007669"/>
    <property type="project" value="UniProtKB-KW"/>
</dbReference>
<dbReference type="GO" id="GO:0006783">
    <property type="term" value="P:heme biosynthetic process"/>
    <property type="evidence" value="ECO:0007669"/>
    <property type="project" value="UniProtKB-UniRule"/>
</dbReference>
<dbReference type="CDD" id="cd00419">
    <property type="entry name" value="Ferrochelatase_C"/>
    <property type="match status" value="1"/>
</dbReference>
<dbReference type="CDD" id="cd03411">
    <property type="entry name" value="Ferrochelatase_N"/>
    <property type="match status" value="1"/>
</dbReference>
<dbReference type="FunFam" id="3.40.50.1400:FF:000004">
    <property type="entry name" value="Ferrochelatase"/>
    <property type="match status" value="1"/>
</dbReference>
<dbReference type="Gene3D" id="3.40.50.1400">
    <property type="match status" value="2"/>
</dbReference>
<dbReference type="HAMAP" id="MF_00323">
    <property type="entry name" value="Ferrochelatase"/>
    <property type="match status" value="1"/>
</dbReference>
<dbReference type="InterPro" id="IPR001015">
    <property type="entry name" value="Ferrochelatase"/>
</dbReference>
<dbReference type="InterPro" id="IPR019772">
    <property type="entry name" value="Ferrochelatase_AS"/>
</dbReference>
<dbReference type="InterPro" id="IPR033644">
    <property type="entry name" value="Ferrochelatase_C"/>
</dbReference>
<dbReference type="InterPro" id="IPR033659">
    <property type="entry name" value="Ferrochelatase_N"/>
</dbReference>
<dbReference type="NCBIfam" id="TIGR00109">
    <property type="entry name" value="hemH"/>
    <property type="match status" value="1"/>
</dbReference>
<dbReference type="PANTHER" id="PTHR11108">
    <property type="entry name" value="FERROCHELATASE"/>
    <property type="match status" value="1"/>
</dbReference>
<dbReference type="PANTHER" id="PTHR11108:SF1">
    <property type="entry name" value="FERROCHELATASE, MITOCHONDRIAL"/>
    <property type="match status" value="1"/>
</dbReference>
<dbReference type="Pfam" id="PF00762">
    <property type="entry name" value="Ferrochelatase"/>
    <property type="match status" value="1"/>
</dbReference>
<dbReference type="SUPFAM" id="SSF53800">
    <property type="entry name" value="Chelatase"/>
    <property type="match status" value="1"/>
</dbReference>
<dbReference type="PROSITE" id="PS00534">
    <property type="entry name" value="FERROCHELATASE"/>
    <property type="match status" value="1"/>
</dbReference>
<gene>
    <name evidence="1" type="primary">hemH</name>
    <name type="ordered locus">SSPA2076</name>
</gene>
<keyword id="KW-0963">Cytoplasm</keyword>
<keyword id="KW-0350">Heme biosynthesis</keyword>
<keyword id="KW-0408">Iron</keyword>
<keyword id="KW-0456">Lyase</keyword>
<keyword id="KW-0479">Metal-binding</keyword>
<keyword id="KW-0627">Porphyrin biosynthesis</keyword>
<name>HEMH_SALPK</name>
<accession>B5BD43</accession>
<feature type="chain" id="PRO_1000116079" description="Ferrochelatase">
    <location>
        <begin position="1"/>
        <end position="320"/>
    </location>
</feature>
<feature type="binding site" evidence="1">
    <location>
        <position position="194"/>
    </location>
    <ligand>
        <name>Fe cation</name>
        <dbReference type="ChEBI" id="CHEBI:24875"/>
    </ligand>
</feature>
<feature type="binding site" evidence="1">
    <location>
        <position position="275"/>
    </location>
    <ligand>
        <name>Fe cation</name>
        <dbReference type="ChEBI" id="CHEBI:24875"/>
    </ligand>
</feature>
<comment type="function">
    <text evidence="1">Catalyzes the ferrous insertion into protoporphyrin IX.</text>
</comment>
<comment type="catalytic activity">
    <reaction evidence="1">
        <text>heme b + 2 H(+) = protoporphyrin IX + Fe(2+)</text>
        <dbReference type="Rhea" id="RHEA:22584"/>
        <dbReference type="ChEBI" id="CHEBI:15378"/>
        <dbReference type="ChEBI" id="CHEBI:29033"/>
        <dbReference type="ChEBI" id="CHEBI:57306"/>
        <dbReference type="ChEBI" id="CHEBI:60344"/>
        <dbReference type="EC" id="4.98.1.1"/>
    </reaction>
</comment>
<comment type="pathway">
    <text evidence="1">Porphyrin-containing compound metabolism; protoheme biosynthesis; protoheme from protoporphyrin-IX: step 1/1.</text>
</comment>
<comment type="subunit">
    <text evidence="1">Monomer.</text>
</comment>
<comment type="subcellular location">
    <subcellularLocation>
        <location evidence="1">Cytoplasm</location>
    </subcellularLocation>
</comment>
<comment type="similarity">
    <text evidence="1">Belongs to the ferrochelatase family.</text>
</comment>
<organism>
    <name type="scientific">Salmonella paratyphi A (strain AKU_12601)</name>
    <dbReference type="NCBI Taxonomy" id="554290"/>
    <lineage>
        <taxon>Bacteria</taxon>
        <taxon>Pseudomonadati</taxon>
        <taxon>Pseudomonadota</taxon>
        <taxon>Gammaproteobacteria</taxon>
        <taxon>Enterobacterales</taxon>
        <taxon>Enterobacteriaceae</taxon>
        <taxon>Salmonella</taxon>
    </lineage>
</organism>